<protein>
    <recommendedName>
        <fullName evidence="1">Nicotinate-nucleotide--dimethylbenzimidazole phosphoribosyltransferase</fullName>
        <shortName evidence="1">NN:DBI PRT</shortName>
        <ecNumber evidence="1">2.4.2.21</ecNumber>
    </recommendedName>
    <alternativeName>
        <fullName evidence="1">N(1)-alpha-phosphoribosyltransferase</fullName>
    </alternativeName>
</protein>
<organism>
    <name type="scientific">Ruegeria sp. (strain TM1040)</name>
    <name type="common">Silicibacter sp.</name>
    <dbReference type="NCBI Taxonomy" id="292414"/>
    <lineage>
        <taxon>Bacteria</taxon>
        <taxon>Pseudomonadati</taxon>
        <taxon>Pseudomonadota</taxon>
        <taxon>Alphaproteobacteria</taxon>
        <taxon>Rhodobacterales</taxon>
        <taxon>Roseobacteraceae</taxon>
        <taxon>Ruegeria</taxon>
    </lineage>
</organism>
<name>COBT_RUEST</name>
<dbReference type="EC" id="2.4.2.21" evidence="1"/>
<dbReference type="EMBL" id="CP000377">
    <property type="protein sequence ID" value="ABF63311.1"/>
    <property type="molecule type" value="Genomic_DNA"/>
</dbReference>
<dbReference type="RefSeq" id="WP_011537925.1">
    <property type="nucleotide sequence ID" value="NC_008044.1"/>
</dbReference>
<dbReference type="SMR" id="Q1GJ55"/>
<dbReference type="STRING" id="292414.TM1040_0578"/>
<dbReference type="KEGG" id="sit:TM1040_0578"/>
<dbReference type="eggNOG" id="COG2038">
    <property type="taxonomic scope" value="Bacteria"/>
</dbReference>
<dbReference type="HOGENOM" id="CLU_002982_0_1_5"/>
<dbReference type="OrthoDB" id="9781491at2"/>
<dbReference type="UniPathway" id="UPA00061">
    <property type="reaction ID" value="UER00516"/>
</dbReference>
<dbReference type="Proteomes" id="UP000000636">
    <property type="component" value="Chromosome"/>
</dbReference>
<dbReference type="GO" id="GO:0008939">
    <property type="term" value="F:nicotinate-nucleotide-dimethylbenzimidazole phosphoribosyltransferase activity"/>
    <property type="evidence" value="ECO:0007669"/>
    <property type="project" value="UniProtKB-UniRule"/>
</dbReference>
<dbReference type="GO" id="GO:0009236">
    <property type="term" value="P:cobalamin biosynthetic process"/>
    <property type="evidence" value="ECO:0007669"/>
    <property type="project" value="UniProtKB-KW"/>
</dbReference>
<dbReference type="CDD" id="cd02439">
    <property type="entry name" value="DMB-PRT_CobT"/>
    <property type="match status" value="1"/>
</dbReference>
<dbReference type="Gene3D" id="1.10.1610.10">
    <property type="match status" value="1"/>
</dbReference>
<dbReference type="Gene3D" id="3.40.50.10210">
    <property type="match status" value="1"/>
</dbReference>
<dbReference type="HAMAP" id="MF_00230">
    <property type="entry name" value="CobT"/>
    <property type="match status" value="1"/>
</dbReference>
<dbReference type="InterPro" id="IPR003200">
    <property type="entry name" value="Nict_dMeBzImd_PRibTrfase"/>
</dbReference>
<dbReference type="InterPro" id="IPR017846">
    <property type="entry name" value="Nict_dMeBzImd_PRibTrfase_bact"/>
</dbReference>
<dbReference type="InterPro" id="IPR023195">
    <property type="entry name" value="Nict_dMeBzImd_PRibTrfase_N"/>
</dbReference>
<dbReference type="InterPro" id="IPR036087">
    <property type="entry name" value="Nict_dMeBzImd_PRibTrfase_sf"/>
</dbReference>
<dbReference type="NCBIfam" id="TIGR03160">
    <property type="entry name" value="cobT_DBIPRT"/>
    <property type="match status" value="1"/>
</dbReference>
<dbReference type="NCBIfam" id="NF000996">
    <property type="entry name" value="PRK00105.1"/>
    <property type="match status" value="1"/>
</dbReference>
<dbReference type="PANTHER" id="PTHR43463">
    <property type="entry name" value="NICOTINATE-NUCLEOTIDE--DIMETHYLBENZIMIDAZOLE PHOSPHORIBOSYLTRANSFERASE"/>
    <property type="match status" value="1"/>
</dbReference>
<dbReference type="PANTHER" id="PTHR43463:SF1">
    <property type="entry name" value="NICOTINATE-NUCLEOTIDE--DIMETHYLBENZIMIDAZOLE PHOSPHORIBOSYLTRANSFERASE"/>
    <property type="match status" value="1"/>
</dbReference>
<dbReference type="Pfam" id="PF02277">
    <property type="entry name" value="DBI_PRT"/>
    <property type="match status" value="1"/>
</dbReference>
<dbReference type="SUPFAM" id="SSF52733">
    <property type="entry name" value="Nicotinate mononucleotide:5,6-dimethylbenzimidazole phosphoribosyltransferase (CobT)"/>
    <property type="match status" value="1"/>
</dbReference>
<accession>Q1GJ55</accession>
<keyword id="KW-0169">Cobalamin biosynthesis</keyword>
<keyword id="KW-0328">Glycosyltransferase</keyword>
<keyword id="KW-1185">Reference proteome</keyword>
<keyword id="KW-0808">Transferase</keyword>
<gene>
    <name evidence="1" type="primary">cobT</name>
    <name type="ordered locus">TM1040_0578</name>
</gene>
<feature type="chain" id="PRO_1000058771" description="Nicotinate-nucleotide--dimethylbenzimidazole phosphoribosyltransferase">
    <location>
        <begin position="1"/>
        <end position="336"/>
    </location>
</feature>
<feature type="active site" description="Proton acceptor" evidence="1">
    <location>
        <position position="304"/>
    </location>
</feature>
<evidence type="ECO:0000255" key="1">
    <source>
        <dbReference type="HAMAP-Rule" id="MF_00230"/>
    </source>
</evidence>
<comment type="function">
    <text evidence="1">Catalyzes the synthesis of alpha-ribazole-5'-phosphate from nicotinate mononucleotide (NAMN) and 5,6-dimethylbenzimidazole (DMB).</text>
</comment>
<comment type="catalytic activity">
    <reaction evidence="1">
        <text>5,6-dimethylbenzimidazole + nicotinate beta-D-ribonucleotide = alpha-ribazole 5'-phosphate + nicotinate + H(+)</text>
        <dbReference type="Rhea" id="RHEA:11196"/>
        <dbReference type="ChEBI" id="CHEBI:15378"/>
        <dbReference type="ChEBI" id="CHEBI:15890"/>
        <dbReference type="ChEBI" id="CHEBI:32544"/>
        <dbReference type="ChEBI" id="CHEBI:57502"/>
        <dbReference type="ChEBI" id="CHEBI:57918"/>
        <dbReference type="EC" id="2.4.2.21"/>
    </reaction>
</comment>
<comment type="pathway">
    <text evidence="1">Nucleoside biosynthesis; alpha-ribazole biosynthesis; alpha-ribazole from 5,6-dimethylbenzimidazole: step 1/2.</text>
</comment>
<comment type="similarity">
    <text evidence="1">Belongs to the CobT family.</text>
</comment>
<sequence length="336" mass="34226">MLPDLTTLSDFRNALAQAPGADADARAACEDRNGQLTKPPGALGQLEEIAIWYGSWRGTARPEVRAPQVIVFAGNHGVTARGVSAFPAEVTVQMVANFKAGGAAINQLAQLADARMDVHALELDRPTADFTQGPAMSEEDLLAALRTGWNAVDPASDVLVVGEMGIGNTTSAAAICHALYGGEPGDWTGRGTGVDDEGLALKTAVIAEAVALHGSRDGLEVLRCLGGREIAAMAGAIAAARVLRIPVILDGFICCAAAASLARLHDQALDHAVAGHQSAEGGHQALLARLGKAPLLSLGLRLGEGSGAALAIQVLKGALACHSGMATFAEAGVSDG</sequence>
<proteinExistence type="inferred from homology"/>
<reference key="1">
    <citation type="submission" date="2006-05" db="EMBL/GenBank/DDBJ databases">
        <title>Complete sequence of chromosome of Silicibacter sp. TM1040.</title>
        <authorList>
            <consortium name="US DOE Joint Genome Institute"/>
            <person name="Copeland A."/>
            <person name="Lucas S."/>
            <person name="Lapidus A."/>
            <person name="Barry K."/>
            <person name="Detter J.C."/>
            <person name="Glavina del Rio T."/>
            <person name="Hammon N."/>
            <person name="Israni S."/>
            <person name="Dalin E."/>
            <person name="Tice H."/>
            <person name="Pitluck S."/>
            <person name="Brettin T."/>
            <person name="Bruce D."/>
            <person name="Han C."/>
            <person name="Tapia R."/>
            <person name="Goodwin L."/>
            <person name="Thompson L.S."/>
            <person name="Gilna P."/>
            <person name="Schmutz J."/>
            <person name="Larimer F."/>
            <person name="Land M."/>
            <person name="Hauser L."/>
            <person name="Kyrpides N."/>
            <person name="Kim E."/>
            <person name="Belas R."/>
            <person name="Moran M.A."/>
            <person name="Buchan A."/>
            <person name="Gonzalez J.M."/>
            <person name="Schell M.A."/>
            <person name="Sun F."/>
            <person name="Richardson P."/>
        </authorList>
    </citation>
    <scope>NUCLEOTIDE SEQUENCE [LARGE SCALE GENOMIC DNA]</scope>
    <source>
        <strain>TM1040</strain>
    </source>
</reference>